<proteinExistence type="evidence at protein level"/>
<sequence length="132" mass="14263">MRYAVLLAVVLLLGAFTAEAFSPPPFHICKWKLWKCLKWCAPWDWKCRRKCFWKYWWCLKKFGGHYGGYGYGDDGYGGGGYGGGGYGGGYGGGYGGGYGGGYGDVGYGGGYSGGYSGGYSGGYGSYGHRRKY</sequence>
<reference evidence="4" key="1">
    <citation type="journal article" date="2010" name="Mol. Biol. Evol.">
        <title>Parallel evolution of nacre building gene sets in molluscs.</title>
        <authorList>
            <person name="Jackson D.J."/>
            <person name="McDougall C."/>
            <person name="Woodcroft B."/>
            <person name="Moase P."/>
            <person name="Rose R.A."/>
            <person name="Kube M."/>
            <person name="Reinhardt R."/>
            <person name="Rokhsar D.S."/>
            <person name="Montagnani C."/>
            <person name="Joubert C."/>
            <person name="Piquemal D."/>
            <person name="Degnan B.M."/>
        </authorList>
    </citation>
    <scope>NUCLEOTIDE SEQUENCE [MRNA]</scope>
    <scope>IDENTIFICATION</scope>
    <source>
        <tissue evidence="2">Mantle</tissue>
    </source>
</reference>
<reference key="2">
    <citation type="journal article" date="2012" name="Proc. Natl. Acad. Sci. U.S.A.">
        <title>Different secretory repertoires control the biomineralization processes of prism and nacre deposition of the pearl oyster shell.</title>
        <authorList>
            <person name="Marie B."/>
            <person name="Joubert C."/>
            <person name="Tayale A."/>
            <person name="Zanella-Cleon I."/>
            <person name="Belliard C."/>
            <person name="Piquemal D."/>
            <person name="Cochennec-Laureau N."/>
            <person name="Marin F."/>
            <person name="Gueguen Y."/>
            <person name="Montagnani C."/>
        </authorList>
    </citation>
    <scope>PROTEIN SEQUENCE OF 26-44</scope>
    <scope>SUBCELLULAR LOCATION</scope>
    <scope>TISSUE SPECIFICITY</scope>
    <source>
        <tissue>Shell</tissue>
    </source>
</reference>
<name>GRP3_PINMA</name>
<organism>
    <name type="scientific">Pinctada maxima</name>
    <name type="common">Silver-lipped pearl oyster</name>
    <name type="synonym">White-lipped pearl oyster</name>
    <dbReference type="NCBI Taxonomy" id="104660"/>
    <lineage>
        <taxon>Eukaryota</taxon>
        <taxon>Metazoa</taxon>
        <taxon>Spiralia</taxon>
        <taxon>Lophotrochozoa</taxon>
        <taxon>Mollusca</taxon>
        <taxon>Bivalvia</taxon>
        <taxon>Autobranchia</taxon>
        <taxon>Pteriomorphia</taxon>
        <taxon>Pterioida</taxon>
        <taxon>Pterioidea</taxon>
        <taxon>Pteriidae</taxon>
        <taxon>Pinctada</taxon>
    </lineage>
</organism>
<protein>
    <recommendedName>
        <fullName>Glycine-rich protein 3</fullName>
    </recommendedName>
    <alternativeName>
        <fullName>Lysine-rich matrix protein 7</fullName>
        <shortName>KRMP7</shortName>
    </alternativeName>
</protein>
<accession>P86960</accession>
<dbReference type="EMBL" id="GT278195">
    <property type="status" value="NOT_ANNOTATED_CDS"/>
    <property type="molecule type" value="mRNA"/>
</dbReference>
<dbReference type="EMBL" id="GT278602">
    <property type="status" value="NOT_ANNOTATED_CDS"/>
    <property type="molecule type" value="mRNA"/>
</dbReference>
<dbReference type="EMBL" id="GT280399">
    <property type="status" value="NOT_ANNOTATED_CDS"/>
    <property type="molecule type" value="mRNA"/>
</dbReference>
<dbReference type="EMBL" id="GT280864">
    <property type="status" value="NOT_ANNOTATED_CDS"/>
    <property type="molecule type" value="mRNA"/>
</dbReference>
<dbReference type="EMBL" id="GT281180">
    <property type="status" value="NOT_ANNOTATED_CDS"/>
    <property type="molecule type" value="mRNA"/>
</dbReference>
<dbReference type="EMBL" id="GT282406">
    <property type="status" value="NOT_ANNOTATED_CDS"/>
    <property type="molecule type" value="mRNA"/>
</dbReference>
<dbReference type="EMBL" id="GT283049">
    <property type="status" value="NOT_ANNOTATED_CDS"/>
    <property type="molecule type" value="mRNA"/>
</dbReference>
<dbReference type="EMBL" id="EZ420202">
    <property type="status" value="NOT_ANNOTATED_CDS"/>
    <property type="molecule type" value="mRNA"/>
</dbReference>
<dbReference type="GO" id="GO:0005576">
    <property type="term" value="C:extracellular region"/>
    <property type="evidence" value="ECO:0007669"/>
    <property type="project" value="UniProtKB-SubCell"/>
</dbReference>
<evidence type="ECO:0000255" key="1"/>
<evidence type="ECO:0000269" key="2">
    <source>
    </source>
</evidence>
<evidence type="ECO:0000269" key="3">
    <source>
    </source>
</evidence>
<evidence type="ECO:0000305" key="4"/>
<feature type="signal peptide" evidence="1">
    <location>
        <begin position="1"/>
        <end position="20"/>
    </location>
</feature>
<feature type="chain" id="PRO_0000413073" description="Glycine-rich protein 3" evidence="1">
    <location>
        <begin position="21"/>
        <end position="132"/>
    </location>
</feature>
<feature type="sequence conflict" description="In Ref. 1; GT278602." evidence="4" ref="1">
    <original>D</original>
    <variation>Y</variation>
    <location>
        <position position="104"/>
    </location>
</feature>
<keyword id="KW-0903">Direct protein sequencing</keyword>
<keyword id="KW-0964">Secreted</keyword>
<keyword id="KW-0732">Signal</keyword>
<comment type="subcellular location">
    <subcellularLocation>
        <location evidence="3">Secreted</location>
    </subcellularLocation>
</comment>
<comment type="tissue specificity">
    <text evidence="3">Prismatic layer of shell (at protein level). Expressed primarily in the mantle with highest level in the mantle edge and lower level in the mantle pallium.</text>
</comment>